<dbReference type="EMBL" id="CP000352">
    <property type="protein sequence ID" value="ABF09383.1"/>
    <property type="molecule type" value="Genomic_DNA"/>
</dbReference>
<dbReference type="RefSeq" id="WP_008648084.1">
    <property type="nucleotide sequence ID" value="NC_007973.1"/>
</dbReference>
<dbReference type="SMR" id="Q1LKE3"/>
<dbReference type="STRING" id="266264.Rmet_2506"/>
<dbReference type="KEGG" id="rme:Rmet_2506"/>
<dbReference type="eggNOG" id="COG0326">
    <property type="taxonomic scope" value="Bacteria"/>
</dbReference>
<dbReference type="HOGENOM" id="CLU_006684_3_0_4"/>
<dbReference type="Proteomes" id="UP000002429">
    <property type="component" value="Chromosome"/>
</dbReference>
<dbReference type="GO" id="GO:0005737">
    <property type="term" value="C:cytoplasm"/>
    <property type="evidence" value="ECO:0007669"/>
    <property type="project" value="UniProtKB-SubCell"/>
</dbReference>
<dbReference type="GO" id="GO:0005524">
    <property type="term" value="F:ATP binding"/>
    <property type="evidence" value="ECO:0007669"/>
    <property type="project" value="UniProtKB-UniRule"/>
</dbReference>
<dbReference type="GO" id="GO:0016887">
    <property type="term" value="F:ATP hydrolysis activity"/>
    <property type="evidence" value="ECO:0007669"/>
    <property type="project" value="InterPro"/>
</dbReference>
<dbReference type="GO" id="GO:0140662">
    <property type="term" value="F:ATP-dependent protein folding chaperone"/>
    <property type="evidence" value="ECO:0007669"/>
    <property type="project" value="InterPro"/>
</dbReference>
<dbReference type="GO" id="GO:0051082">
    <property type="term" value="F:unfolded protein binding"/>
    <property type="evidence" value="ECO:0007669"/>
    <property type="project" value="UniProtKB-UniRule"/>
</dbReference>
<dbReference type="CDD" id="cd16927">
    <property type="entry name" value="HATPase_Hsp90-like"/>
    <property type="match status" value="1"/>
</dbReference>
<dbReference type="FunFam" id="3.30.230.80:FF:000002">
    <property type="entry name" value="Molecular chaperone HtpG"/>
    <property type="match status" value="1"/>
</dbReference>
<dbReference type="FunFam" id="3.30.565.10:FF:000009">
    <property type="entry name" value="Molecular chaperone HtpG"/>
    <property type="match status" value="1"/>
</dbReference>
<dbReference type="Gene3D" id="3.30.230.80">
    <property type="match status" value="1"/>
</dbReference>
<dbReference type="Gene3D" id="3.40.50.11260">
    <property type="match status" value="1"/>
</dbReference>
<dbReference type="Gene3D" id="1.20.120.790">
    <property type="entry name" value="Heat shock protein 90, C-terminal domain"/>
    <property type="match status" value="1"/>
</dbReference>
<dbReference type="Gene3D" id="3.30.565.10">
    <property type="entry name" value="Histidine kinase-like ATPase, C-terminal domain"/>
    <property type="match status" value="1"/>
</dbReference>
<dbReference type="HAMAP" id="MF_00505">
    <property type="entry name" value="HSP90"/>
    <property type="match status" value="1"/>
</dbReference>
<dbReference type="InterPro" id="IPR036890">
    <property type="entry name" value="HATPase_C_sf"/>
</dbReference>
<dbReference type="InterPro" id="IPR019805">
    <property type="entry name" value="Heat_shock_protein_90_CS"/>
</dbReference>
<dbReference type="InterPro" id="IPR037196">
    <property type="entry name" value="HSP90_C"/>
</dbReference>
<dbReference type="InterPro" id="IPR001404">
    <property type="entry name" value="Hsp90_fam"/>
</dbReference>
<dbReference type="InterPro" id="IPR020575">
    <property type="entry name" value="Hsp90_N"/>
</dbReference>
<dbReference type="InterPro" id="IPR020568">
    <property type="entry name" value="Ribosomal_Su5_D2-typ_SF"/>
</dbReference>
<dbReference type="NCBIfam" id="NF003555">
    <property type="entry name" value="PRK05218.1"/>
    <property type="match status" value="1"/>
</dbReference>
<dbReference type="PANTHER" id="PTHR11528">
    <property type="entry name" value="HEAT SHOCK PROTEIN 90 FAMILY MEMBER"/>
    <property type="match status" value="1"/>
</dbReference>
<dbReference type="Pfam" id="PF13589">
    <property type="entry name" value="HATPase_c_3"/>
    <property type="match status" value="1"/>
</dbReference>
<dbReference type="Pfam" id="PF00183">
    <property type="entry name" value="HSP90"/>
    <property type="match status" value="1"/>
</dbReference>
<dbReference type="PIRSF" id="PIRSF002583">
    <property type="entry name" value="Hsp90"/>
    <property type="match status" value="1"/>
</dbReference>
<dbReference type="PRINTS" id="PR00775">
    <property type="entry name" value="HEATSHOCK90"/>
</dbReference>
<dbReference type="SMART" id="SM00387">
    <property type="entry name" value="HATPase_c"/>
    <property type="match status" value="1"/>
</dbReference>
<dbReference type="SUPFAM" id="SSF55874">
    <property type="entry name" value="ATPase domain of HSP90 chaperone/DNA topoisomerase II/histidine kinase"/>
    <property type="match status" value="1"/>
</dbReference>
<dbReference type="SUPFAM" id="SSF110942">
    <property type="entry name" value="HSP90 C-terminal domain"/>
    <property type="match status" value="1"/>
</dbReference>
<dbReference type="SUPFAM" id="SSF54211">
    <property type="entry name" value="Ribosomal protein S5 domain 2-like"/>
    <property type="match status" value="1"/>
</dbReference>
<dbReference type="PROSITE" id="PS00298">
    <property type="entry name" value="HSP90"/>
    <property type="match status" value="1"/>
</dbReference>
<feature type="chain" id="PRO_0000258519" description="Chaperone protein HtpG">
    <location>
        <begin position="1"/>
        <end position="633"/>
    </location>
</feature>
<feature type="region of interest" description="A; substrate-binding" evidence="1">
    <location>
        <begin position="1"/>
        <end position="341"/>
    </location>
</feature>
<feature type="region of interest" description="B" evidence="1">
    <location>
        <begin position="342"/>
        <end position="562"/>
    </location>
</feature>
<feature type="region of interest" description="C" evidence="1">
    <location>
        <begin position="563"/>
        <end position="633"/>
    </location>
</feature>
<accession>Q1LKE3</accession>
<reference key="1">
    <citation type="journal article" date="2010" name="PLoS ONE">
        <title>The complete genome sequence of Cupriavidus metallidurans strain CH34, a master survivalist in harsh and anthropogenic environments.</title>
        <authorList>
            <person name="Janssen P.J."/>
            <person name="Van Houdt R."/>
            <person name="Moors H."/>
            <person name="Monsieurs P."/>
            <person name="Morin N."/>
            <person name="Michaux A."/>
            <person name="Benotmane M.A."/>
            <person name="Leys N."/>
            <person name="Vallaeys T."/>
            <person name="Lapidus A."/>
            <person name="Monchy S."/>
            <person name="Medigue C."/>
            <person name="Taghavi S."/>
            <person name="McCorkle S."/>
            <person name="Dunn J."/>
            <person name="van der Lelie D."/>
            <person name="Mergeay M."/>
        </authorList>
    </citation>
    <scope>NUCLEOTIDE SEQUENCE [LARGE SCALE GENOMIC DNA]</scope>
    <source>
        <strain>ATCC 43123 / DSM 2839 / NBRC 102507 / CH34</strain>
    </source>
</reference>
<sequence length="633" mass="71067">MTAPHETMSFQAEVKQLLHLMIHSLYSNKEIFLRELVSNASDATDKLRFEAIANPALLENDADLAIRIEADPAARTLKITDNGIGMSRDEAIRNLGTIARSGTKEFFQQLSGDQQKDAALIGQFGVGFYSAFIVADKVTVETRRAGLAADEAVRWESAGDGEFSIDAINRAERGSTITLHLREGEDDFLSSYRLQNIIRKYSDHISLPIRMPKEEWDAEAQQQKVTGEWESVNQASALWTRSKSDITDEQYQAFYQHIAHDHEAPLAWTHNRVEGRSEYTQLLYIPARAPFDLWDRNHKAGLKLYVKRVFIMDDADQLLPAYLRWVKGVVDSADLPLNVSRELLQESRDVKAIREGCAKRVLSMLEAMADSEDEAERAKYKTFWEQFGQVLKEGVGEDHGNGERIAKLLRFATTHGDTAEQSVSLVDYVGRMKEGQDKIYYVTADTWVAAKSSPHLEVFRKKGIEVVLLTDRVDEWLLSYLHEFDGKQLVSVARGDLDLGALADEAEKAEQEKASADWKEVVDRAKSVLEGKAKDVRVTLRLTDSASCLVSDDGDMSGYLQRLLKQAGQKAPDAQPILELNPEHALVKKLRDLPDGEAFGDRVRVLFDQALLAEGGMLDDPAAYVQRVNRLLA</sequence>
<evidence type="ECO:0000255" key="1">
    <source>
        <dbReference type="HAMAP-Rule" id="MF_00505"/>
    </source>
</evidence>
<name>HTPG_CUPMC</name>
<gene>
    <name evidence="1" type="primary">htpG</name>
    <name type="ordered locus">Rmet_2506</name>
</gene>
<comment type="function">
    <text evidence="1">Molecular chaperone. Has ATPase activity.</text>
</comment>
<comment type="subunit">
    <text evidence="1">Homodimer.</text>
</comment>
<comment type="subcellular location">
    <subcellularLocation>
        <location evidence="1">Cytoplasm</location>
    </subcellularLocation>
</comment>
<comment type="similarity">
    <text evidence="1">Belongs to the heat shock protein 90 family.</text>
</comment>
<protein>
    <recommendedName>
        <fullName evidence="1">Chaperone protein HtpG</fullName>
    </recommendedName>
    <alternativeName>
        <fullName evidence="1">Heat shock protein HtpG</fullName>
    </alternativeName>
    <alternativeName>
        <fullName evidence="1">High temperature protein G</fullName>
    </alternativeName>
</protein>
<proteinExistence type="inferred from homology"/>
<keyword id="KW-0067">ATP-binding</keyword>
<keyword id="KW-0143">Chaperone</keyword>
<keyword id="KW-0963">Cytoplasm</keyword>
<keyword id="KW-0547">Nucleotide-binding</keyword>
<keyword id="KW-1185">Reference proteome</keyword>
<keyword id="KW-0346">Stress response</keyword>
<organism>
    <name type="scientific">Cupriavidus metallidurans (strain ATCC 43123 / DSM 2839 / NBRC 102507 / CH34)</name>
    <name type="common">Ralstonia metallidurans</name>
    <dbReference type="NCBI Taxonomy" id="266264"/>
    <lineage>
        <taxon>Bacteria</taxon>
        <taxon>Pseudomonadati</taxon>
        <taxon>Pseudomonadota</taxon>
        <taxon>Betaproteobacteria</taxon>
        <taxon>Burkholderiales</taxon>
        <taxon>Burkholderiaceae</taxon>
        <taxon>Cupriavidus</taxon>
    </lineage>
</organism>